<keyword id="KW-0963">Cytoplasm</keyword>
<keyword id="KW-0539">Nucleus</keyword>
<keyword id="KW-0647">Proteasome</keyword>
<keyword id="KW-1185">Reference proteome</keyword>
<feature type="chain" id="PRO_0000242702" description="Proteasome subunit alpha type-4-2">
    <location>
        <begin position="1"/>
        <end position="250"/>
    </location>
</feature>
<dbReference type="EMBL" id="AB023482">
    <property type="protein sequence ID" value="BAA78755.1"/>
    <property type="molecule type" value="Genomic_DNA"/>
</dbReference>
<dbReference type="EMBL" id="AP002864">
    <property type="protein sequence ID" value="BAD67962.1"/>
    <property type="molecule type" value="Genomic_DNA"/>
</dbReference>
<dbReference type="EMBL" id="AP008212">
    <property type="protein sequence ID" value="BAF18836.1"/>
    <property type="molecule type" value="Genomic_DNA"/>
</dbReference>
<dbReference type="EMBL" id="AP014962">
    <property type="protein sequence ID" value="BAS96351.1"/>
    <property type="molecule type" value="Genomic_DNA"/>
</dbReference>
<dbReference type="EMBL" id="CM000143">
    <property type="protein sequence ID" value="EEE65162.1"/>
    <property type="molecule type" value="Genomic_DNA"/>
</dbReference>
<dbReference type="EMBL" id="AK067977">
    <property type="protein sequence ID" value="BAG90693.1"/>
    <property type="molecule type" value="mRNA"/>
</dbReference>
<dbReference type="RefSeq" id="XP_015644466.1">
    <property type="nucleotide sequence ID" value="XM_015788980.1"/>
</dbReference>
<dbReference type="SMR" id="Q5VRG3"/>
<dbReference type="FunCoup" id="Q5VRG3">
    <property type="interactions" value="3267"/>
</dbReference>
<dbReference type="STRING" id="39947.Q5VRG3"/>
<dbReference type="MEROPS" id="T01.973"/>
<dbReference type="PaxDb" id="39947-Q5VRG3"/>
<dbReference type="EnsemblPlants" id="Os06t0167600-01">
    <property type="protein sequence ID" value="Os06t0167600-01"/>
    <property type="gene ID" value="Os06g0167600"/>
</dbReference>
<dbReference type="Gramene" id="Os06t0167600-01">
    <property type="protein sequence ID" value="Os06t0167600-01"/>
    <property type="gene ID" value="Os06g0167600"/>
</dbReference>
<dbReference type="KEGG" id="dosa:Os06g0167600"/>
<dbReference type="eggNOG" id="KOG0178">
    <property type="taxonomic scope" value="Eukaryota"/>
</dbReference>
<dbReference type="HOGENOM" id="CLU_035750_4_3_1"/>
<dbReference type="InParanoid" id="Q5VRG3"/>
<dbReference type="OMA" id="RECFKVV"/>
<dbReference type="OrthoDB" id="431557at2759"/>
<dbReference type="Proteomes" id="UP000000763">
    <property type="component" value="Chromosome 6"/>
</dbReference>
<dbReference type="Proteomes" id="UP000007752">
    <property type="component" value="Chromosome 6"/>
</dbReference>
<dbReference type="Proteomes" id="UP000059680">
    <property type="component" value="Chromosome 6"/>
</dbReference>
<dbReference type="GO" id="GO:0005829">
    <property type="term" value="C:cytosol"/>
    <property type="evidence" value="ECO:0000318"/>
    <property type="project" value="GO_Central"/>
</dbReference>
<dbReference type="GO" id="GO:0005634">
    <property type="term" value="C:nucleus"/>
    <property type="evidence" value="ECO:0000318"/>
    <property type="project" value="GO_Central"/>
</dbReference>
<dbReference type="GO" id="GO:0019773">
    <property type="term" value="C:proteasome core complex, alpha-subunit complex"/>
    <property type="evidence" value="ECO:0000250"/>
    <property type="project" value="UniProtKB"/>
</dbReference>
<dbReference type="GO" id="GO:0043161">
    <property type="term" value="P:proteasome-mediated ubiquitin-dependent protein catabolic process"/>
    <property type="evidence" value="ECO:0000318"/>
    <property type="project" value="GO_Central"/>
</dbReference>
<dbReference type="CDD" id="cd03752">
    <property type="entry name" value="proteasome_alpha_type_4"/>
    <property type="match status" value="1"/>
</dbReference>
<dbReference type="FunFam" id="3.60.20.10:FF:000031">
    <property type="entry name" value="Proteasome subunit alpha type"/>
    <property type="match status" value="1"/>
</dbReference>
<dbReference type="Gene3D" id="3.60.20.10">
    <property type="entry name" value="Glutamine Phosphoribosylpyrophosphate, subunit 1, domain 1"/>
    <property type="match status" value="1"/>
</dbReference>
<dbReference type="InterPro" id="IPR029055">
    <property type="entry name" value="Ntn_hydrolases_N"/>
</dbReference>
<dbReference type="InterPro" id="IPR050115">
    <property type="entry name" value="Proteasome_alpha"/>
</dbReference>
<dbReference type="InterPro" id="IPR023332">
    <property type="entry name" value="Proteasome_alpha-type"/>
</dbReference>
<dbReference type="InterPro" id="IPR000426">
    <property type="entry name" value="Proteasome_asu_N"/>
</dbReference>
<dbReference type="InterPro" id="IPR001353">
    <property type="entry name" value="Proteasome_sua/b"/>
</dbReference>
<dbReference type="NCBIfam" id="NF003075">
    <property type="entry name" value="PRK03996.1"/>
    <property type="match status" value="1"/>
</dbReference>
<dbReference type="PANTHER" id="PTHR11599">
    <property type="entry name" value="PROTEASOME SUBUNIT ALPHA/BETA"/>
    <property type="match status" value="1"/>
</dbReference>
<dbReference type="Pfam" id="PF00227">
    <property type="entry name" value="Proteasome"/>
    <property type="match status" value="1"/>
</dbReference>
<dbReference type="Pfam" id="PF10584">
    <property type="entry name" value="Proteasome_A_N"/>
    <property type="match status" value="1"/>
</dbReference>
<dbReference type="SMART" id="SM00948">
    <property type="entry name" value="Proteasome_A_N"/>
    <property type="match status" value="1"/>
</dbReference>
<dbReference type="SUPFAM" id="SSF56235">
    <property type="entry name" value="N-terminal nucleophile aminohydrolases (Ntn hydrolases)"/>
    <property type="match status" value="1"/>
</dbReference>
<dbReference type="PROSITE" id="PS00388">
    <property type="entry name" value="PROTEASOME_ALPHA_1"/>
    <property type="match status" value="1"/>
</dbReference>
<dbReference type="PROSITE" id="PS51475">
    <property type="entry name" value="PROTEASOME_ALPHA_2"/>
    <property type="match status" value="1"/>
</dbReference>
<proteinExistence type="evidence at transcript level"/>
<reference key="1">
    <citation type="journal article" date="2005" name="Nature">
        <title>The map-based sequence of the rice genome.</title>
        <authorList>
            <consortium name="International rice genome sequencing project (IRGSP)"/>
        </authorList>
    </citation>
    <scope>NUCLEOTIDE SEQUENCE [LARGE SCALE GENOMIC DNA]</scope>
    <source>
        <strain>cv. Nipponbare</strain>
    </source>
</reference>
<reference key="2">
    <citation type="journal article" date="2008" name="Nucleic Acids Res.">
        <title>The rice annotation project database (RAP-DB): 2008 update.</title>
        <authorList>
            <consortium name="The rice annotation project (RAP)"/>
        </authorList>
    </citation>
    <scope>GENOME REANNOTATION</scope>
    <source>
        <strain>cv. Nipponbare</strain>
    </source>
</reference>
<reference key="3">
    <citation type="journal article" date="2013" name="Rice">
        <title>Improvement of the Oryza sativa Nipponbare reference genome using next generation sequence and optical map data.</title>
        <authorList>
            <person name="Kawahara Y."/>
            <person name="de la Bastide M."/>
            <person name="Hamilton J.P."/>
            <person name="Kanamori H."/>
            <person name="McCombie W.R."/>
            <person name="Ouyang S."/>
            <person name="Schwartz D.C."/>
            <person name="Tanaka T."/>
            <person name="Wu J."/>
            <person name="Zhou S."/>
            <person name="Childs K.L."/>
            <person name="Davidson R.M."/>
            <person name="Lin H."/>
            <person name="Quesada-Ocampo L."/>
            <person name="Vaillancourt B."/>
            <person name="Sakai H."/>
            <person name="Lee S.S."/>
            <person name="Kim J."/>
            <person name="Numa H."/>
            <person name="Itoh T."/>
            <person name="Buell C.R."/>
            <person name="Matsumoto T."/>
        </authorList>
    </citation>
    <scope>GENOME REANNOTATION</scope>
    <source>
        <strain>cv. Nipponbare</strain>
    </source>
</reference>
<reference key="4">
    <citation type="journal article" date="2005" name="PLoS Biol.">
        <title>The genomes of Oryza sativa: a history of duplications.</title>
        <authorList>
            <person name="Yu J."/>
            <person name="Wang J."/>
            <person name="Lin W."/>
            <person name="Li S."/>
            <person name="Li H."/>
            <person name="Zhou J."/>
            <person name="Ni P."/>
            <person name="Dong W."/>
            <person name="Hu S."/>
            <person name="Zeng C."/>
            <person name="Zhang J."/>
            <person name="Zhang Y."/>
            <person name="Li R."/>
            <person name="Xu Z."/>
            <person name="Li S."/>
            <person name="Li X."/>
            <person name="Zheng H."/>
            <person name="Cong L."/>
            <person name="Lin L."/>
            <person name="Yin J."/>
            <person name="Geng J."/>
            <person name="Li G."/>
            <person name="Shi J."/>
            <person name="Liu J."/>
            <person name="Lv H."/>
            <person name="Li J."/>
            <person name="Wang J."/>
            <person name="Deng Y."/>
            <person name="Ran L."/>
            <person name="Shi X."/>
            <person name="Wang X."/>
            <person name="Wu Q."/>
            <person name="Li C."/>
            <person name="Ren X."/>
            <person name="Wang J."/>
            <person name="Wang X."/>
            <person name="Li D."/>
            <person name="Liu D."/>
            <person name="Zhang X."/>
            <person name="Ji Z."/>
            <person name="Zhao W."/>
            <person name="Sun Y."/>
            <person name="Zhang Z."/>
            <person name="Bao J."/>
            <person name="Han Y."/>
            <person name="Dong L."/>
            <person name="Ji J."/>
            <person name="Chen P."/>
            <person name="Wu S."/>
            <person name="Liu J."/>
            <person name="Xiao Y."/>
            <person name="Bu D."/>
            <person name="Tan J."/>
            <person name="Yang L."/>
            <person name="Ye C."/>
            <person name="Zhang J."/>
            <person name="Xu J."/>
            <person name="Zhou Y."/>
            <person name="Yu Y."/>
            <person name="Zhang B."/>
            <person name="Zhuang S."/>
            <person name="Wei H."/>
            <person name="Liu B."/>
            <person name="Lei M."/>
            <person name="Yu H."/>
            <person name="Li Y."/>
            <person name="Xu H."/>
            <person name="Wei S."/>
            <person name="He X."/>
            <person name="Fang L."/>
            <person name="Zhang Z."/>
            <person name="Zhang Y."/>
            <person name="Huang X."/>
            <person name="Su Z."/>
            <person name="Tong W."/>
            <person name="Li J."/>
            <person name="Tong Z."/>
            <person name="Li S."/>
            <person name="Ye J."/>
            <person name="Wang L."/>
            <person name="Fang L."/>
            <person name="Lei T."/>
            <person name="Chen C.-S."/>
            <person name="Chen H.-C."/>
            <person name="Xu Z."/>
            <person name="Li H."/>
            <person name="Huang H."/>
            <person name="Zhang F."/>
            <person name="Xu H."/>
            <person name="Li N."/>
            <person name="Zhao C."/>
            <person name="Li S."/>
            <person name="Dong L."/>
            <person name="Huang Y."/>
            <person name="Li L."/>
            <person name="Xi Y."/>
            <person name="Qi Q."/>
            <person name="Li W."/>
            <person name="Zhang B."/>
            <person name="Hu W."/>
            <person name="Zhang Y."/>
            <person name="Tian X."/>
            <person name="Jiao Y."/>
            <person name="Liang X."/>
            <person name="Jin J."/>
            <person name="Gao L."/>
            <person name="Zheng W."/>
            <person name="Hao B."/>
            <person name="Liu S.-M."/>
            <person name="Wang W."/>
            <person name="Yuan L."/>
            <person name="Cao M."/>
            <person name="McDermott J."/>
            <person name="Samudrala R."/>
            <person name="Wang J."/>
            <person name="Wong G.K.-S."/>
            <person name="Yang H."/>
        </authorList>
    </citation>
    <scope>NUCLEOTIDE SEQUENCE [LARGE SCALE GENOMIC DNA]</scope>
    <source>
        <strain>cv. Nipponbare</strain>
    </source>
</reference>
<reference key="5">
    <citation type="journal article" date="2003" name="Science">
        <title>Collection, mapping, and annotation of over 28,000 cDNA clones from japonica rice.</title>
        <authorList>
            <consortium name="The rice full-length cDNA consortium"/>
        </authorList>
    </citation>
    <scope>NUCLEOTIDE SEQUENCE [LARGE SCALE MRNA]</scope>
    <source>
        <strain>cv. Nipponbare</strain>
    </source>
</reference>
<sequence>MSRRYDSRTTIFSPEGRLYQVEYAMEAIGNAGSALGVLAADGVVLVGEKKVTSKLLQTSRSAEKMYKIDSHLACAVAGIMSDANILLNTARLHAQRYALSYQEPIPVEQLVQSLCDTKQGYTQFGGLRPFGVSFLFAGWDKHHGFQLYMSDPSGNYSGWKAAAVGANSQAAQSMLKQDYRDGLTREEAVALALKVLSKTMDSTSLTAEKLELAEVFLQPGTGEVQYQVCSPEAMGKLLAKAGLSQPAPEA</sequence>
<organism>
    <name type="scientific">Oryza sativa subsp. japonica</name>
    <name type="common">Rice</name>
    <dbReference type="NCBI Taxonomy" id="39947"/>
    <lineage>
        <taxon>Eukaryota</taxon>
        <taxon>Viridiplantae</taxon>
        <taxon>Streptophyta</taxon>
        <taxon>Embryophyta</taxon>
        <taxon>Tracheophyta</taxon>
        <taxon>Spermatophyta</taxon>
        <taxon>Magnoliopsida</taxon>
        <taxon>Liliopsida</taxon>
        <taxon>Poales</taxon>
        <taxon>Poaceae</taxon>
        <taxon>BOP clade</taxon>
        <taxon>Oryzoideae</taxon>
        <taxon>Oryzeae</taxon>
        <taxon>Oryzinae</taxon>
        <taxon>Oryza</taxon>
        <taxon>Oryza sativa</taxon>
    </lineage>
</organism>
<gene>
    <name type="ordered locus">Os06g0167600</name>
    <name type="ordered locus">LOC_Os06g07140</name>
    <name evidence="3" type="ORF">OsJ_20263</name>
    <name type="ORF">OSJNBa0033B09.8</name>
    <name type="ORF">P0680A03.29</name>
</gene>
<accession>Q5VRG3</accession>
<accession>B7EE96</accession>
<accession>Q0DE87</accession>
<accession>Q9LE92</accession>
<accession>Q9XIZ9</accession>
<comment type="function">
    <text>The proteasome is a multicatalytic proteinase complex which is characterized by its ability to cleave peptides with Arg, Phe, Tyr, Leu, and Glu adjacent to the leaving group at neutral or slightly basic pH. The proteasome has an ATP-dependent proteolytic activity.</text>
</comment>
<comment type="subunit">
    <text evidence="1">The 26S proteasome consists of a 20S proteasome core and two 19S regulatory subunits. The 20S proteasome core is composed of 28 subunits that are arranged in four stacked rings, resulting in a barrel-shaped structure. The two end rings are each formed by seven alpha subunits, and the two central rings are each formed by seven beta subunits. The catalytic chamber with the active sites is on the inside of the barrel (By similarity).</text>
</comment>
<comment type="subcellular location">
    <subcellularLocation>
        <location evidence="1">Cytoplasm</location>
    </subcellularLocation>
    <subcellularLocation>
        <location evidence="1">Nucleus</location>
    </subcellularLocation>
</comment>
<comment type="similarity">
    <text evidence="2">Belongs to the peptidase T1A family.</text>
</comment>
<protein>
    <recommendedName>
        <fullName>Proteasome subunit alpha type-4-2</fullName>
    </recommendedName>
    <alternativeName>
        <fullName>20S proteasome alpha subunit C</fullName>
    </alternativeName>
    <alternativeName>
        <fullName>20S proteasome subunit alpha-3</fullName>
    </alternativeName>
</protein>
<name>PSA4B_ORYSJ</name>
<evidence type="ECO:0000250" key="1"/>
<evidence type="ECO:0000255" key="2">
    <source>
        <dbReference type="PROSITE-ProRule" id="PRU00808"/>
    </source>
</evidence>
<evidence type="ECO:0000312" key="3">
    <source>
        <dbReference type="EMBL" id="EEE65162.1"/>
    </source>
</evidence>